<comment type="function">
    <text evidence="1">Catalyzes the condensation of carbamoyl phosphate and aspartate to form carbamoyl aspartate and inorganic phosphate, the committed step in the de novo pyrimidine nucleotide biosynthesis pathway.</text>
</comment>
<comment type="catalytic activity">
    <reaction evidence="1">
        <text>carbamoyl phosphate + L-aspartate = N-carbamoyl-L-aspartate + phosphate + H(+)</text>
        <dbReference type="Rhea" id="RHEA:20013"/>
        <dbReference type="ChEBI" id="CHEBI:15378"/>
        <dbReference type="ChEBI" id="CHEBI:29991"/>
        <dbReference type="ChEBI" id="CHEBI:32814"/>
        <dbReference type="ChEBI" id="CHEBI:43474"/>
        <dbReference type="ChEBI" id="CHEBI:58228"/>
        <dbReference type="EC" id="2.1.3.2"/>
    </reaction>
</comment>
<comment type="pathway">
    <text evidence="1">Pyrimidine metabolism; UMP biosynthesis via de novo pathway; (S)-dihydroorotate from bicarbonate: step 2/3.</text>
</comment>
<comment type="subunit">
    <text evidence="1">Heterododecamer (2C3:3R2) of six catalytic PyrB chains organized as two trimers (C3), and six regulatory PyrI chains organized as three dimers (R2).</text>
</comment>
<comment type="similarity">
    <text evidence="1">Belongs to the aspartate/ornithine carbamoyltransferase superfamily. ATCase family.</text>
</comment>
<keyword id="KW-0665">Pyrimidine biosynthesis</keyword>
<keyword id="KW-1185">Reference proteome</keyword>
<keyword id="KW-0808">Transferase</keyword>
<dbReference type="EC" id="2.1.3.2" evidence="1"/>
<dbReference type="EMBL" id="CP000478">
    <property type="protein sequence ID" value="ABK17773.1"/>
    <property type="molecule type" value="Genomic_DNA"/>
</dbReference>
<dbReference type="RefSeq" id="WP_011698942.1">
    <property type="nucleotide sequence ID" value="NC_008554.1"/>
</dbReference>
<dbReference type="SMR" id="A0LK21"/>
<dbReference type="FunCoup" id="A0LK21">
    <property type="interactions" value="565"/>
</dbReference>
<dbReference type="STRING" id="335543.Sfum_2090"/>
<dbReference type="KEGG" id="sfu:Sfum_2090"/>
<dbReference type="eggNOG" id="COG0540">
    <property type="taxonomic scope" value="Bacteria"/>
</dbReference>
<dbReference type="HOGENOM" id="CLU_043846_2_0_7"/>
<dbReference type="InParanoid" id="A0LK21"/>
<dbReference type="OrthoDB" id="9774690at2"/>
<dbReference type="UniPathway" id="UPA00070">
    <property type="reaction ID" value="UER00116"/>
</dbReference>
<dbReference type="Proteomes" id="UP000001784">
    <property type="component" value="Chromosome"/>
</dbReference>
<dbReference type="GO" id="GO:0005829">
    <property type="term" value="C:cytosol"/>
    <property type="evidence" value="ECO:0007669"/>
    <property type="project" value="TreeGrafter"/>
</dbReference>
<dbReference type="GO" id="GO:0016597">
    <property type="term" value="F:amino acid binding"/>
    <property type="evidence" value="ECO:0007669"/>
    <property type="project" value="InterPro"/>
</dbReference>
<dbReference type="GO" id="GO:0004070">
    <property type="term" value="F:aspartate carbamoyltransferase activity"/>
    <property type="evidence" value="ECO:0007669"/>
    <property type="project" value="UniProtKB-UniRule"/>
</dbReference>
<dbReference type="GO" id="GO:0006207">
    <property type="term" value="P:'de novo' pyrimidine nucleobase biosynthetic process"/>
    <property type="evidence" value="ECO:0007669"/>
    <property type="project" value="InterPro"/>
</dbReference>
<dbReference type="GO" id="GO:0044205">
    <property type="term" value="P:'de novo' UMP biosynthetic process"/>
    <property type="evidence" value="ECO:0007669"/>
    <property type="project" value="UniProtKB-UniRule"/>
</dbReference>
<dbReference type="GO" id="GO:0006520">
    <property type="term" value="P:amino acid metabolic process"/>
    <property type="evidence" value="ECO:0007669"/>
    <property type="project" value="InterPro"/>
</dbReference>
<dbReference type="FunFam" id="3.40.50.1370:FF:000007">
    <property type="entry name" value="Aspartate carbamoyltransferase"/>
    <property type="match status" value="1"/>
</dbReference>
<dbReference type="Gene3D" id="3.40.50.1370">
    <property type="entry name" value="Aspartate/ornithine carbamoyltransferase"/>
    <property type="match status" value="2"/>
</dbReference>
<dbReference type="HAMAP" id="MF_00001">
    <property type="entry name" value="Asp_carb_tr"/>
    <property type="match status" value="1"/>
</dbReference>
<dbReference type="InterPro" id="IPR006132">
    <property type="entry name" value="Asp/Orn_carbamoyltranf_P-bd"/>
</dbReference>
<dbReference type="InterPro" id="IPR006130">
    <property type="entry name" value="Asp/Orn_carbamoylTrfase"/>
</dbReference>
<dbReference type="InterPro" id="IPR036901">
    <property type="entry name" value="Asp/Orn_carbamoylTrfase_sf"/>
</dbReference>
<dbReference type="InterPro" id="IPR002082">
    <property type="entry name" value="Asp_carbamoyltransf"/>
</dbReference>
<dbReference type="InterPro" id="IPR006131">
    <property type="entry name" value="Asp_carbamoyltransf_Asp/Orn-bd"/>
</dbReference>
<dbReference type="NCBIfam" id="TIGR00670">
    <property type="entry name" value="asp_carb_tr"/>
    <property type="match status" value="1"/>
</dbReference>
<dbReference type="NCBIfam" id="NF002032">
    <property type="entry name" value="PRK00856.1"/>
    <property type="match status" value="1"/>
</dbReference>
<dbReference type="PANTHER" id="PTHR45753:SF6">
    <property type="entry name" value="ASPARTATE CARBAMOYLTRANSFERASE"/>
    <property type="match status" value="1"/>
</dbReference>
<dbReference type="PANTHER" id="PTHR45753">
    <property type="entry name" value="ORNITHINE CARBAMOYLTRANSFERASE, MITOCHONDRIAL"/>
    <property type="match status" value="1"/>
</dbReference>
<dbReference type="Pfam" id="PF00185">
    <property type="entry name" value="OTCace"/>
    <property type="match status" value="1"/>
</dbReference>
<dbReference type="Pfam" id="PF02729">
    <property type="entry name" value="OTCace_N"/>
    <property type="match status" value="1"/>
</dbReference>
<dbReference type="PRINTS" id="PR00100">
    <property type="entry name" value="AOTCASE"/>
</dbReference>
<dbReference type="PRINTS" id="PR00101">
    <property type="entry name" value="ATCASE"/>
</dbReference>
<dbReference type="SUPFAM" id="SSF53671">
    <property type="entry name" value="Aspartate/ornithine carbamoyltransferase"/>
    <property type="match status" value="1"/>
</dbReference>
<dbReference type="PROSITE" id="PS00097">
    <property type="entry name" value="CARBAMOYLTRANSFERASE"/>
    <property type="match status" value="1"/>
</dbReference>
<sequence>MPFKRKDLLGLRELDVHEIEHILELAVSLKEINARPIKKVPTLRGKTVIHLFYEPSTRTRTSFDIAAKRLSADTYSITTAASSMVKGETLLDTVKNLEAMKPDVFVLRHTVSGTPHRIARHTTASVINAGDGMHEHPSQALLDMMTMLEHKKKLDGLTVAILGDIAHSRVARSNIWGLRKMGAKVILCGPITLIPPEAHTMGVEVSHKLGEIIPEADVIMVLRLQKERQQQMLLPSLREYSIYYGLTAEKLKKARRNVLIMHPGPLNRGVEISPDVADGPHSVILDQVTNGVAVRMALLYLLGQK</sequence>
<gene>
    <name evidence="1" type="primary">pyrB</name>
    <name type="ordered locus">Sfum_2090</name>
</gene>
<protein>
    <recommendedName>
        <fullName evidence="1">Aspartate carbamoyltransferase catalytic subunit</fullName>
        <ecNumber evidence="1">2.1.3.2</ecNumber>
    </recommendedName>
    <alternativeName>
        <fullName evidence="1">Aspartate transcarbamylase</fullName>
        <shortName evidence="1">ATCase</shortName>
    </alternativeName>
</protein>
<feature type="chain" id="PRO_0000321174" description="Aspartate carbamoyltransferase catalytic subunit">
    <location>
        <begin position="1"/>
        <end position="305"/>
    </location>
</feature>
<feature type="binding site" evidence="1">
    <location>
        <position position="58"/>
    </location>
    <ligand>
        <name>carbamoyl phosphate</name>
        <dbReference type="ChEBI" id="CHEBI:58228"/>
    </ligand>
</feature>
<feature type="binding site" evidence="1">
    <location>
        <position position="59"/>
    </location>
    <ligand>
        <name>carbamoyl phosphate</name>
        <dbReference type="ChEBI" id="CHEBI:58228"/>
    </ligand>
</feature>
<feature type="binding site" evidence="1">
    <location>
        <position position="86"/>
    </location>
    <ligand>
        <name>L-aspartate</name>
        <dbReference type="ChEBI" id="CHEBI:29991"/>
    </ligand>
</feature>
<feature type="binding site" evidence="1">
    <location>
        <position position="108"/>
    </location>
    <ligand>
        <name>carbamoyl phosphate</name>
        <dbReference type="ChEBI" id="CHEBI:58228"/>
    </ligand>
</feature>
<feature type="binding site" evidence="1">
    <location>
        <position position="136"/>
    </location>
    <ligand>
        <name>carbamoyl phosphate</name>
        <dbReference type="ChEBI" id="CHEBI:58228"/>
    </ligand>
</feature>
<feature type="binding site" evidence="1">
    <location>
        <position position="139"/>
    </location>
    <ligand>
        <name>carbamoyl phosphate</name>
        <dbReference type="ChEBI" id="CHEBI:58228"/>
    </ligand>
</feature>
<feature type="binding site" evidence="1">
    <location>
        <position position="169"/>
    </location>
    <ligand>
        <name>L-aspartate</name>
        <dbReference type="ChEBI" id="CHEBI:29991"/>
    </ligand>
</feature>
<feature type="binding site" evidence="1">
    <location>
        <position position="223"/>
    </location>
    <ligand>
        <name>L-aspartate</name>
        <dbReference type="ChEBI" id="CHEBI:29991"/>
    </ligand>
</feature>
<feature type="binding site" evidence="1">
    <location>
        <position position="264"/>
    </location>
    <ligand>
        <name>carbamoyl phosphate</name>
        <dbReference type="ChEBI" id="CHEBI:58228"/>
    </ligand>
</feature>
<feature type="binding site" evidence="1">
    <location>
        <position position="265"/>
    </location>
    <ligand>
        <name>carbamoyl phosphate</name>
        <dbReference type="ChEBI" id="CHEBI:58228"/>
    </ligand>
</feature>
<evidence type="ECO:0000255" key="1">
    <source>
        <dbReference type="HAMAP-Rule" id="MF_00001"/>
    </source>
</evidence>
<reference key="1">
    <citation type="submission" date="2006-10" db="EMBL/GenBank/DDBJ databases">
        <title>Complete sequence of Syntrophobacter fumaroxidans MPOB.</title>
        <authorList>
            <consortium name="US DOE Joint Genome Institute"/>
            <person name="Copeland A."/>
            <person name="Lucas S."/>
            <person name="Lapidus A."/>
            <person name="Barry K."/>
            <person name="Detter J.C."/>
            <person name="Glavina del Rio T."/>
            <person name="Hammon N."/>
            <person name="Israni S."/>
            <person name="Pitluck S."/>
            <person name="Goltsman E.G."/>
            <person name="Martinez M."/>
            <person name="Schmutz J."/>
            <person name="Larimer F."/>
            <person name="Land M."/>
            <person name="Hauser L."/>
            <person name="Kyrpides N."/>
            <person name="Kim E."/>
            <person name="Boone D.R."/>
            <person name="Brockman F."/>
            <person name="Culley D."/>
            <person name="Ferry J."/>
            <person name="Gunsalus R."/>
            <person name="McInerney M.J."/>
            <person name="Morrison M."/>
            <person name="Plugge C."/>
            <person name="Rohlin L."/>
            <person name="Scholten J."/>
            <person name="Sieber J."/>
            <person name="Stams A.J.M."/>
            <person name="Worm P."/>
            <person name="Henstra A.M."/>
            <person name="Richardson P."/>
        </authorList>
    </citation>
    <scope>NUCLEOTIDE SEQUENCE [LARGE SCALE GENOMIC DNA]</scope>
    <source>
        <strain>DSM 10017 / MPOB</strain>
    </source>
</reference>
<accession>A0LK21</accession>
<proteinExistence type="inferred from homology"/>
<organism>
    <name type="scientific">Syntrophobacter fumaroxidans (strain DSM 10017 / MPOB)</name>
    <dbReference type="NCBI Taxonomy" id="335543"/>
    <lineage>
        <taxon>Bacteria</taxon>
        <taxon>Pseudomonadati</taxon>
        <taxon>Thermodesulfobacteriota</taxon>
        <taxon>Syntrophobacteria</taxon>
        <taxon>Syntrophobacterales</taxon>
        <taxon>Syntrophobacteraceae</taxon>
        <taxon>Syntrophobacter</taxon>
    </lineage>
</organism>
<name>PYRB_SYNFM</name>